<organism>
    <name type="scientific">Arabidopsis thaliana</name>
    <name type="common">Mouse-ear cress</name>
    <dbReference type="NCBI Taxonomy" id="3702"/>
    <lineage>
        <taxon>Eukaryota</taxon>
        <taxon>Viridiplantae</taxon>
        <taxon>Streptophyta</taxon>
        <taxon>Embryophyta</taxon>
        <taxon>Tracheophyta</taxon>
        <taxon>Spermatophyta</taxon>
        <taxon>Magnoliopsida</taxon>
        <taxon>eudicotyledons</taxon>
        <taxon>Gunneridae</taxon>
        <taxon>Pentapetalae</taxon>
        <taxon>rosids</taxon>
        <taxon>malvids</taxon>
        <taxon>Brassicales</taxon>
        <taxon>Brassicaceae</taxon>
        <taxon>Camelineae</taxon>
        <taxon>Arabidopsis</taxon>
    </lineage>
</organism>
<feature type="chain" id="PRO_0000283155" description="Putative FBD-associated F-box protein At5g56400">
    <location>
        <begin position="1"/>
        <end position="455"/>
    </location>
</feature>
<feature type="domain" description="F-box" evidence="1">
    <location>
        <begin position="32"/>
        <end position="81"/>
    </location>
</feature>
<feature type="domain" description="FBD">
    <location>
        <begin position="372"/>
        <end position="421"/>
    </location>
</feature>
<dbReference type="EMBL" id="AB009049">
    <property type="protein sequence ID" value="BAB11268.1"/>
    <property type="status" value="ALT_SEQ"/>
    <property type="molecule type" value="Genomic_DNA"/>
</dbReference>
<dbReference type="EMBL" id="CP002688">
    <property type="protein sequence ID" value="AED96760.1"/>
    <property type="molecule type" value="Genomic_DNA"/>
</dbReference>
<dbReference type="RefSeq" id="NP_200451.2">
    <property type="nucleotide sequence ID" value="NM_125023.2"/>
</dbReference>
<dbReference type="FunCoup" id="Q9FM91">
    <property type="interactions" value="2"/>
</dbReference>
<dbReference type="iPTMnet" id="Q9FM91"/>
<dbReference type="PaxDb" id="3702-AT5G56400.1"/>
<dbReference type="EnsemblPlants" id="AT5G56400.1">
    <property type="protein sequence ID" value="AT5G56400.1"/>
    <property type="gene ID" value="AT5G56400"/>
</dbReference>
<dbReference type="GeneID" id="835741"/>
<dbReference type="Gramene" id="AT5G56400.1">
    <property type="protein sequence ID" value="AT5G56400.1"/>
    <property type="gene ID" value="AT5G56400"/>
</dbReference>
<dbReference type="KEGG" id="ath:AT5G56400"/>
<dbReference type="Araport" id="AT5G56400"/>
<dbReference type="TAIR" id="AT5G56400"/>
<dbReference type="HOGENOM" id="CLU_010721_1_2_1"/>
<dbReference type="InParanoid" id="Q9FM91"/>
<dbReference type="OMA" id="ALDRNIC"/>
<dbReference type="PRO" id="PR:Q9FM91"/>
<dbReference type="Proteomes" id="UP000006548">
    <property type="component" value="Chromosome 5"/>
</dbReference>
<dbReference type="ExpressionAtlas" id="Q9FM91">
    <property type="expression patterns" value="baseline and differential"/>
</dbReference>
<dbReference type="CDD" id="cd22160">
    <property type="entry name" value="F-box_AtFBL13-like"/>
    <property type="match status" value="1"/>
</dbReference>
<dbReference type="Gene3D" id="1.20.1280.50">
    <property type="match status" value="1"/>
</dbReference>
<dbReference type="Gene3D" id="3.80.10.10">
    <property type="entry name" value="Ribonuclease Inhibitor"/>
    <property type="match status" value="1"/>
</dbReference>
<dbReference type="InterPro" id="IPR036047">
    <property type="entry name" value="F-box-like_dom_sf"/>
</dbReference>
<dbReference type="InterPro" id="IPR053781">
    <property type="entry name" value="F-box_AtFBL13-like"/>
</dbReference>
<dbReference type="InterPro" id="IPR001810">
    <property type="entry name" value="F-box_dom"/>
</dbReference>
<dbReference type="InterPro" id="IPR006566">
    <property type="entry name" value="FBD"/>
</dbReference>
<dbReference type="InterPro" id="IPR050232">
    <property type="entry name" value="FBL13/AtMIF1-like"/>
</dbReference>
<dbReference type="InterPro" id="IPR032675">
    <property type="entry name" value="LRR_dom_sf"/>
</dbReference>
<dbReference type="InterPro" id="IPR013101">
    <property type="entry name" value="LRR_PRU1-like"/>
</dbReference>
<dbReference type="PANTHER" id="PTHR31900:SF34">
    <property type="entry name" value="EMB|CAB62440.1-RELATED"/>
    <property type="match status" value="1"/>
</dbReference>
<dbReference type="PANTHER" id="PTHR31900">
    <property type="entry name" value="F-BOX/RNI SUPERFAMILY PROTEIN-RELATED"/>
    <property type="match status" value="1"/>
</dbReference>
<dbReference type="Pfam" id="PF00646">
    <property type="entry name" value="F-box"/>
    <property type="match status" value="1"/>
</dbReference>
<dbReference type="Pfam" id="PF08387">
    <property type="entry name" value="FBD"/>
    <property type="match status" value="1"/>
</dbReference>
<dbReference type="Pfam" id="PF07723">
    <property type="entry name" value="LRR_2"/>
    <property type="match status" value="1"/>
</dbReference>
<dbReference type="SMART" id="SM00579">
    <property type="entry name" value="FBD"/>
    <property type="match status" value="1"/>
</dbReference>
<dbReference type="SMART" id="SM00256">
    <property type="entry name" value="FBOX"/>
    <property type="match status" value="1"/>
</dbReference>
<dbReference type="SUPFAM" id="SSF81383">
    <property type="entry name" value="F-box domain"/>
    <property type="match status" value="1"/>
</dbReference>
<dbReference type="SUPFAM" id="SSF52058">
    <property type="entry name" value="L domain-like"/>
    <property type="match status" value="1"/>
</dbReference>
<dbReference type="PROSITE" id="PS50181">
    <property type="entry name" value="FBOX"/>
    <property type="match status" value="1"/>
</dbReference>
<reference key="1">
    <citation type="journal article" date="1998" name="DNA Res.">
        <title>Structural analysis of Arabidopsis thaliana chromosome 5. IV. Sequence features of the regions of 1,456,315 bp covered by nineteen physically assigned P1 and TAC clones.</title>
        <authorList>
            <person name="Sato S."/>
            <person name="Kaneko T."/>
            <person name="Kotani H."/>
            <person name="Nakamura Y."/>
            <person name="Asamizu E."/>
            <person name="Miyajima N."/>
            <person name="Tabata S."/>
        </authorList>
    </citation>
    <scope>NUCLEOTIDE SEQUENCE [LARGE SCALE GENOMIC DNA]</scope>
    <source>
        <strain>cv. Columbia</strain>
    </source>
</reference>
<reference key="2">
    <citation type="journal article" date="2017" name="Plant J.">
        <title>Araport11: a complete reannotation of the Arabidopsis thaliana reference genome.</title>
        <authorList>
            <person name="Cheng C.Y."/>
            <person name="Krishnakumar V."/>
            <person name="Chan A.P."/>
            <person name="Thibaud-Nissen F."/>
            <person name="Schobel S."/>
            <person name="Town C.D."/>
        </authorList>
    </citation>
    <scope>GENOME REANNOTATION</scope>
    <source>
        <strain>cv. Columbia</strain>
    </source>
</reference>
<sequence>MNLIRFLLVFQGKIQMNESRKKLNCQSRQFNVDKISDLPEDLLVHILSLLPTTNDIVATSGVSKRWESLWTKVHKLRFNDRIYDGKRYDSFLHFVEKSLILHKAPTLVSLRLSVGPKCTADDIGLWIKLALDRNICELIIKHYPDHGHIRLSRRLCDSKTLVSLKLKNAILGAIWLPTCFISLKTLHLRYVKYSGDESVRTLISSCPSLRNLVVKRHNEDNVKRFAIIVRYLQSLTVYLSPLHGVADSDAYVINTPNLKYLNIKDHYTDLCSFEDMPYLDEANLDVAFTHTENFFESLTSVKKLSLCLKKSNAQYPEGIIFSQLDHLELCTCDDSKWLNILAMLLPDSPKLRVLKLNDKNHDFVDKYCSCTWNQQPSYVPECLTKSLEIFEWRNYKATFRERDVAVYILKNSTCLKKTVISPKLKISGEICDHHIIREDLASLFMGSSSCELKFD</sequence>
<proteinExistence type="predicted"/>
<evidence type="ECO:0000255" key="1">
    <source>
        <dbReference type="PROSITE-ProRule" id="PRU00080"/>
    </source>
</evidence>
<evidence type="ECO:0000305" key="2"/>
<name>FBD23_ARATH</name>
<comment type="sequence caution" evidence="2">
    <conflict type="erroneous gene model prediction">
        <sequence resource="EMBL-CDS" id="BAB11268"/>
    </conflict>
</comment>
<gene>
    <name type="ordered locus">At5g56400</name>
    <name type="ORF">MCD7.16</name>
</gene>
<protein>
    <recommendedName>
        <fullName>Putative FBD-associated F-box protein At5g56400</fullName>
    </recommendedName>
</protein>
<accession>Q9FM91</accession>
<accession>F4K7M9</accession>
<keyword id="KW-1185">Reference proteome</keyword>